<feature type="chain" id="PRO_0000305500" description="Pantothenate synthetase">
    <location>
        <begin position="1"/>
        <end position="279"/>
    </location>
</feature>
<feature type="active site" description="Proton donor" evidence="1">
    <location>
        <position position="33"/>
    </location>
</feature>
<feature type="binding site" evidence="1">
    <location>
        <begin position="26"/>
        <end position="33"/>
    </location>
    <ligand>
        <name>ATP</name>
        <dbReference type="ChEBI" id="CHEBI:30616"/>
    </ligand>
</feature>
<feature type="binding site" evidence="1">
    <location>
        <position position="57"/>
    </location>
    <ligand>
        <name>(R)-pantoate</name>
        <dbReference type="ChEBI" id="CHEBI:15980"/>
    </ligand>
</feature>
<feature type="binding site" evidence="1">
    <location>
        <position position="57"/>
    </location>
    <ligand>
        <name>beta-alanine</name>
        <dbReference type="ChEBI" id="CHEBI:57966"/>
    </ligand>
</feature>
<feature type="binding site" evidence="1">
    <location>
        <begin position="143"/>
        <end position="146"/>
    </location>
    <ligand>
        <name>ATP</name>
        <dbReference type="ChEBI" id="CHEBI:30616"/>
    </ligand>
</feature>
<feature type="binding site" evidence="1">
    <location>
        <position position="149"/>
    </location>
    <ligand>
        <name>(R)-pantoate</name>
        <dbReference type="ChEBI" id="CHEBI:15980"/>
    </ligand>
</feature>
<feature type="binding site" evidence="1">
    <location>
        <position position="172"/>
    </location>
    <ligand>
        <name>ATP</name>
        <dbReference type="ChEBI" id="CHEBI:30616"/>
    </ligand>
</feature>
<feature type="binding site" evidence="1">
    <location>
        <begin position="180"/>
        <end position="183"/>
    </location>
    <ligand>
        <name>ATP</name>
        <dbReference type="ChEBI" id="CHEBI:30616"/>
    </ligand>
</feature>
<reference key="1">
    <citation type="submission" date="2005-08" db="EMBL/GenBank/DDBJ databases">
        <title>Complete sequence of chromosome 1 of Nitrosospira multiformis ATCC 25196.</title>
        <authorList>
            <person name="Copeland A."/>
            <person name="Lucas S."/>
            <person name="Lapidus A."/>
            <person name="Barry K."/>
            <person name="Detter J.C."/>
            <person name="Glavina T."/>
            <person name="Hammon N."/>
            <person name="Israni S."/>
            <person name="Pitluck S."/>
            <person name="Chain P."/>
            <person name="Malfatti S."/>
            <person name="Shin M."/>
            <person name="Vergez L."/>
            <person name="Schmutz J."/>
            <person name="Larimer F."/>
            <person name="Land M."/>
            <person name="Hauser L."/>
            <person name="Kyrpides N."/>
            <person name="Lykidis A."/>
            <person name="Richardson P."/>
        </authorList>
    </citation>
    <scope>NUCLEOTIDE SEQUENCE [LARGE SCALE GENOMIC DNA]</scope>
    <source>
        <strain>ATCC 25196 / NCIMB 11849 / C 71</strain>
    </source>
</reference>
<evidence type="ECO:0000255" key="1">
    <source>
        <dbReference type="HAMAP-Rule" id="MF_00158"/>
    </source>
</evidence>
<gene>
    <name evidence="1" type="primary">panC</name>
    <name type="ordered locus">Nmul_A0878</name>
</gene>
<dbReference type="EC" id="6.3.2.1" evidence="1"/>
<dbReference type="EMBL" id="CP000103">
    <property type="protein sequence ID" value="ABB74181.1"/>
    <property type="molecule type" value="Genomic_DNA"/>
</dbReference>
<dbReference type="RefSeq" id="WP_011380226.1">
    <property type="nucleotide sequence ID" value="NC_007614.1"/>
</dbReference>
<dbReference type="SMR" id="Q2YAP0"/>
<dbReference type="STRING" id="323848.Nmul_A0878"/>
<dbReference type="KEGG" id="nmu:Nmul_A0878"/>
<dbReference type="eggNOG" id="COG0414">
    <property type="taxonomic scope" value="Bacteria"/>
</dbReference>
<dbReference type="HOGENOM" id="CLU_047148_0_0_4"/>
<dbReference type="OrthoDB" id="9773087at2"/>
<dbReference type="UniPathway" id="UPA00028">
    <property type="reaction ID" value="UER00005"/>
</dbReference>
<dbReference type="Proteomes" id="UP000002718">
    <property type="component" value="Chromosome"/>
</dbReference>
<dbReference type="GO" id="GO:0005829">
    <property type="term" value="C:cytosol"/>
    <property type="evidence" value="ECO:0007669"/>
    <property type="project" value="TreeGrafter"/>
</dbReference>
<dbReference type="GO" id="GO:0005524">
    <property type="term" value="F:ATP binding"/>
    <property type="evidence" value="ECO:0007669"/>
    <property type="project" value="UniProtKB-KW"/>
</dbReference>
<dbReference type="GO" id="GO:0004592">
    <property type="term" value="F:pantoate-beta-alanine ligase activity"/>
    <property type="evidence" value="ECO:0007669"/>
    <property type="project" value="UniProtKB-UniRule"/>
</dbReference>
<dbReference type="GO" id="GO:0015940">
    <property type="term" value="P:pantothenate biosynthetic process"/>
    <property type="evidence" value="ECO:0007669"/>
    <property type="project" value="UniProtKB-UniRule"/>
</dbReference>
<dbReference type="CDD" id="cd00560">
    <property type="entry name" value="PanC"/>
    <property type="match status" value="1"/>
</dbReference>
<dbReference type="FunFam" id="3.30.1300.10:FF:000001">
    <property type="entry name" value="Pantothenate synthetase"/>
    <property type="match status" value="1"/>
</dbReference>
<dbReference type="Gene3D" id="3.40.50.620">
    <property type="entry name" value="HUPs"/>
    <property type="match status" value="1"/>
</dbReference>
<dbReference type="Gene3D" id="3.30.1300.10">
    <property type="entry name" value="Pantoate-beta-alanine ligase, C-terminal domain"/>
    <property type="match status" value="1"/>
</dbReference>
<dbReference type="HAMAP" id="MF_00158">
    <property type="entry name" value="PanC"/>
    <property type="match status" value="1"/>
</dbReference>
<dbReference type="InterPro" id="IPR004821">
    <property type="entry name" value="Cyt_trans-like"/>
</dbReference>
<dbReference type="InterPro" id="IPR003721">
    <property type="entry name" value="Pantoate_ligase"/>
</dbReference>
<dbReference type="InterPro" id="IPR042176">
    <property type="entry name" value="Pantoate_ligase_C"/>
</dbReference>
<dbReference type="InterPro" id="IPR014729">
    <property type="entry name" value="Rossmann-like_a/b/a_fold"/>
</dbReference>
<dbReference type="NCBIfam" id="TIGR00125">
    <property type="entry name" value="cyt_tran_rel"/>
    <property type="match status" value="1"/>
</dbReference>
<dbReference type="NCBIfam" id="TIGR00018">
    <property type="entry name" value="panC"/>
    <property type="match status" value="1"/>
</dbReference>
<dbReference type="PANTHER" id="PTHR21299">
    <property type="entry name" value="CYTIDYLATE KINASE/PANTOATE-BETA-ALANINE LIGASE"/>
    <property type="match status" value="1"/>
</dbReference>
<dbReference type="PANTHER" id="PTHR21299:SF1">
    <property type="entry name" value="PANTOATE--BETA-ALANINE LIGASE"/>
    <property type="match status" value="1"/>
</dbReference>
<dbReference type="Pfam" id="PF02569">
    <property type="entry name" value="Pantoate_ligase"/>
    <property type="match status" value="1"/>
</dbReference>
<dbReference type="SUPFAM" id="SSF52374">
    <property type="entry name" value="Nucleotidylyl transferase"/>
    <property type="match status" value="1"/>
</dbReference>
<proteinExistence type="inferred from homology"/>
<sequence length="279" mass="31595">MDVITDISPLRTRLVGESSIAFVPTMGGLHEGHLSLIRAARQHRECVIASIFVNRLQFAPTEDFDRYPRTLEQDCALLEEQGVHIVFAPEEKTLYPVPQEFMVEPSPIANMLEGKYRPGFFRGVATVVLKLFNIVQPQTAVFGKKDYQQLHIVRELARQFNLPIEIVAGETVRASDNLALSSRNRYLREEERAEAIRLYQVLSQVKREIEGGNRNFAGLEENAMKILATHGWNTDYVSIRERDTLAPAQPRDGNMVVLGAARLGETRLIDNLEITPKKE</sequence>
<organism>
    <name type="scientific">Nitrosospira multiformis (strain ATCC 25196 / NCIMB 11849 / C 71)</name>
    <dbReference type="NCBI Taxonomy" id="323848"/>
    <lineage>
        <taxon>Bacteria</taxon>
        <taxon>Pseudomonadati</taxon>
        <taxon>Pseudomonadota</taxon>
        <taxon>Betaproteobacteria</taxon>
        <taxon>Nitrosomonadales</taxon>
        <taxon>Nitrosomonadaceae</taxon>
        <taxon>Nitrosospira</taxon>
    </lineage>
</organism>
<accession>Q2YAP0</accession>
<name>PANC_NITMU</name>
<comment type="function">
    <text evidence="1">Catalyzes the condensation of pantoate with beta-alanine in an ATP-dependent reaction via a pantoyl-adenylate intermediate.</text>
</comment>
<comment type="catalytic activity">
    <reaction evidence="1">
        <text>(R)-pantoate + beta-alanine + ATP = (R)-pantothenate + AMP + diphosphate + H(+)</text>
        <dbReference type="Rhea" id="RHEA:10912"/>
        <dbReference type="ChEBI" id="CHEBI:15378"/>
        <dbReference type="ChEBI" id="CHEBI:15980"/>
        <dbReference type="ChEBI" id="CHEBI:29032"/>
        <dbReference type="ChEBI" id="CHEBI:30616"/>
        <dbReference type="ChEBI" id="CHEBI:33019"/>
        <dbReference type="ChEBI" id="CHEBI:57966"/>
        <dbReference type="ChEBI" id="CHEBI:456215"/>
        <dbReference type="EC" id="6.3.2.1"/>
    </reaction>
</comment>
<comment type="pathway">
    <text evidence="1">Cofactor biosynthesis; (R)-pantothenate biosynthesis; (R)-pantothenate from (R)-pantoate and beta-alanine: step 1/1.</text>
</comment>
<comment type="subunit">
    <text evidence="1">Homodimer.</text>
</comment>
<comment type="subcellular location">
    <subcellularLocation>
        <location evidence="1">Cytoplasm</location>
    </subcellularLocation>
</comment>
<comment type="miscellaneous">
    <text evidence="1">The reaction proceeds by a bi uni uni bi ping pong mechanism.</text>
</comment>
<comment type="similarity">
    <text evidence="1">Belongs to the pantothenate synthetase family.</text>
</comment>
<protein>
    <recommendedName>
        <fullName evidence="1">Pantothenate synthetase</fullName>
        <shortName evidence="1">PS</shortName>
        <ecNumber evidence="1">6.3.2.1</ecNumber>
    </recommendedName>
    <alternativeName>
        <fullName evidence="1">Pantoate--beta-alanine ligase</fullName>
    </alternativeName>
    <alternativeName>
        <fullName evidence="1">Pantoate-activating enzyme</fullName>
    </alternativeName>
</protein>
<keyword id="KW-0067">ATP-binding</keyword>
<keyword id="KW-0963">Cytoplasm</keyword>
<keyword id="KW-0436">Ligase</keyword>
<keyword id="KW-0547">Nucleotide-binding</keyword>
<keyword id="KW-0566">Pantothenate biosynthesis</keyword>
<keyword id="KW-1185">Reference proteome</keyword>